<dbReference type="EC" id="2.3.1.-" evidence="9"/>
<dbReference type="EMBL" id="AB010698">
    <property type="protein sequence ID" value="BAB11089.1"/>
    <property type="status" value="ALT_SEQ"/>
    <property type="molecule type" value="Genomic_DNA"/>
</dbReference>
<dbReference type="EMBL" id="CP002688">
    <property type="protein sequence ID" value="AED95371.1"/>
    <property type="molecule type" value="Genomic_DNA"/>
</dbReference>
<dbReference type="EMBL" id="AY136339">
    <property type="protein sequence ID" value="AAM97005.1"/>
    <property type="molecule type" value="mRNA"/>
</dbReference>
<dbReference type="EMBL" id="AF424606">
    <property type="protein sequence ID" value="AAL11600.1"/>
    <property type="molecule type" value="mRNA"/>
</dbReference>
<dbReference type="RefSeq" id="NP_568662.1">
    <property type="nucleotide sequence ID" value="NM_124004.3"/>
</dbReference>
<dbReference type="FunCoup" id="Q8L7C8">
    <property type="interactions" value="1996"/>
</dbReference>
<dbReference type="STRING" id="3702.Q8L7C8"/>
<dbReference type="GlyCosmos" id="Q8L7C8">
    <property type="glycosylation" value="2 sites, No reported glycans"/>
</dbReference>
<dbReference type="GlyGen" id="Q8L7C8">
    <property type="glycosylation" value="3 sites"/>
</dbReference>
<dbReference type="iPTMnet" id="Q8L7C8"/>
<dbReference type="PaxDb" id="3702-AT5G46340.1"/>
<dbReference type="ProteomicsDB" id="232722"/>
<dbReference type="EnsemblPlants" id="AT5G46340.1">
    <property type="protein sequence ID" value="AT5G46340.1"/>
    <property type="gene ID" value="AT5G46340"/>
</dbReference>
<dbReference type="GeneID" id="834677"/>
<dbReference type="Gramene" id="AT5G46340.1">
    <property type="protein sequence ID" value="AT5G46340.1"/>
    <property type="gene ID" value="AT5G46340"/>
</dbReference>
<dbReference type="KEGG" id="ath:AT5G46340"/>
<dbReference type="Araport" id="AT5G46340"/>
<dbReference type="TAIR" id="AT5G46340">
    <property type="gene designation" value="RWA1"/>
</dbReference>
<dbReference type="eggNOG" id="KOG1699">
    <property type="taxonomic scope" value="Eukaryota"/>
</dbReference>
<dbReference type="HOGENOM" id="CLU_020608_0_0_1"/>
<dbReference type="InParanoid" id="Q8L7C8"/>
<dbReference type="OMA" id="IMEDSFL"/>
<dbReference type="PhylomeDB" id="Q8L7C8"/>
<dbReference type="PRO" id="PR:Q8L7C8"/>
<dbReference type="Proteomes" id="UP000006548">
    <property type="component" value="Chromosome 5"/>
</dbReference>
<dbReference type="ExpressionAtlas" id="Q8L7C8">
    <property type="expression patterns" value="baseline and differential"/>
</dbReference>
<dbReference type="GO" id="GO:0005794">
    <property type="term" value="C:Golgi apparatus"/>
    <property type="evidence" value="ECO:0000314"/>
    <property type="project" value="TAIR"/>
</dbReference>
<dbReference type="GO" id="GO:0000139">
    <property type="term" value="C:Golgi membrane"/>
    <property type="evidence" value="ECO:0007669"/>
    <property type="project" value="UniProtKB-SubCell"/>
</dbReference>
<dbReference type="GO" id="GO:0016491">
    <property type="term" value="F:oxidoreductase activity"/>
    <property type="evidence" value="ECO:0007669"/>
    <property type="project" value="UniProtKB-KW"/>
</dbReference>
<dbReference type="GO" id="GO:0016740">
    <property type="term" value="F:transferase activity"/>
    <property type="evidence" value="ECO:0007669"/>
    <property type="project" value="UniProtKB-KW"/>
</dbReference>
<dbReference type="GO" id="GO:0009834">
    <property type="term" value="P:plant-type secondary cell wall biogenesis"/>
    <property type="evidence" value="ECO:0000315"/>
    <property type="project" value="UniProtKB"/>
</dbReference>
<dbReference type="GO" id="GO:1990937">
    <property type="term" value="P:xylan acetylation"/>
    <property type="evidence" value="ECO:0000316"/>
    <property type="project" value="TAIR"/>
</dbReference>
<dbReference type="GO" id="GO:0045492">
    <property type="term" value="P:xylan biosynthetic process"/>
    <property type="evidence" value="ECO:0000315"/>
    <property type="project" value="UniProtKB"/>
</dbReference>
<dbReference type="GO" id="GO:0045491">
    <property type="term" value="P:xylan metabolic process"/>
    <property type="evidence" value="ECO:0000315"/>
    <property type="project" value="UniProtKB"/>
</dbReference>
<dbReference type="InterPro" id="IPR012419">
    <property type="entry name" value="Cas1_AcylTrans_dom"/>
</dbReference>
<dbReference type="PANTHER" id="PTHR13533">
    <property type="entry name" value="N-ACETYLNEURAMINATE 9-O-ACETYLTRANSFERASE"/>
    <property type="match status" value="1"/>
</dbReference>
<dbReference type="PANTHER" id="PTHR13533:SF1">
    <property type="entry name" value="N-ACETYLNEURAMINATE 9-O-ACETYLTRANSFERASE"/>
    <property type="match status" value="1"/>
</dbReference>
<dbReference type="Pfam" id="PF07779">
    <property type="entry name" value="Cas1_AcylT"/>
    <property type="match status" value="1"/>
</dbReference>
<gene>
    <name evidence="7 8" type="primary">RWA1</name>
    <name evidence="11" type="ordered locus">At5g46340</name>
    <name evidence="12" type="ORF">MPL12.14</name>
</gene>
<accession>Q8L7C8</accession>
<accession>Q944Q8</accession>
<accession>Q9FL27</accession>
<feature type="chain" id="PRO_0000434395" description="Protein REDUCED WALL ACETYLATION 1">
    <location>
        <begin position="1"/>
        <end position="540"/>
    </location>
</feature>
<feature type="transmembrane region" description="Helical" evidence="2">
    <location>
        <begin position="7"/>
        <end position="27"/>
    </location>
</feature>
<feature type="transmembrane region" description="Helical" evidence="2">
    <location>
        <begin position="134"/>
        <end position="154"/>
    </location>
</feature>
<feature type="transmembrane region" description="Helical" evidence="2">
    <location>
        <begin position="182"/>
        <end position="202"/>
    </location>
</feature>
<feature type="transmembrane region" description="Helical" evidence="2">
    <location>
        <begin position="203"/>
        <end position="223"/>
    </location>
</feature>
<feature type="transmembrane region" description="Helical" evidence="2">
    <location>
        <begin position="235"/>
        <end position="252"/>
    </location>
</feature>
<feature type="transmembrane region" description="Helical" evidence="2">
    <location>
        <begin position="257"/>
        <end position="277"/>
    </location>
</feature>
<feature type="transmembrane region" description="Helical" evidence="2">
    <location>
        <begin position="291"/>
        <end position="311"/>
    </location>
</feature>
<feature type="transmembrane region" description="Helical" evidence="2">
    <location>
        <begin position="377"/>
        <end position="397"/>
    </location>
</feature>
<feature type="transmembrane region" description="Helical" evidence="2">
    <location>
        <begin position="436"/>
        <end position="456"/>
    </location>
</feature>
<feature type="transmembrane region" description="Helical" evidence="2">
    <location>
        <begin position="470"/>
        <end position="490"/>
    </location>
</feature>
<feature type="transmembrane region" description="Helical" evidence="2">
    <location>
        <begin position="518"/>
        <end position="538"/>
    </location>
</feature>
<feature type="modified residue" description="Phosphoserine" evidence="1">
    <location>
        <position position="44"/>
    </location>
</feature>
<feature type="glycosylation site" description="N-linked (GlcNAc...) asparagine" evidence="3">
    <location>
        <position position="79"/>
    </location>
</feature>
<feature type="glycosylation site" description="N-linked (GlcNAc...) asparagine" evidence="3">
    <location>
        <position position="424"/>
    </location>
</feature>
<feature type="sequence conflict" description="In Ref. 3; AAL11600." evidence="9" ref="3">
    <original>P</original>
    <variation>R</variation>
    <location>
        <position position="476"/>
    </location>
</feature>
<sequence length="540" mass="63336">MVDPGPITPGQVSFLLGVIPIFVGWIYSELLEYRKSWVPLKPHSDNNLVELGDVAEKDDDKADLLEGGLARSPSVKFHNSSIRTNIIRFLSMEDSFLLEHRATLRAMSEFGAILIYFYICDRTELLGDSTKNYNRDLFLFLYVLLIIVSAMTSLRKHNDKSPISGKSILYLNRHQTEEWKGWMQVLFLMYHYFAAAEIYNAIRIFIAAYVWMTGFGNFSYYYVRKDFSVARFAQMMWRLNFFVAFCCIVLNNDYMLYYICPMHTLFTLMVYGALGIFSKYNEIGSVMALKIFSCFLVVFLLWEIPGAFEIFWGPLTFLLGYNDPAKPDLHRLHEWHFRSGLDRYIWIIGMIYAYYHPTVERWMEKLEDCETKKRLSIKAAIVTITVLVGYVWYECIYKLDRTSYNMYHPYTSWIPITVYICLRNFTHQLRSVSLTLFAWLGKITLETYISQFHIWLRSNMPDGQPKWLLSIIPGYPMLNFMLTTAIYVLVSHRLFELTNTLKTVFVPTKDNKRLFSNFIAGIAIALPLYCFSFVLLQIHR</sequence>
<name>RWA1_ARATH</name>
<keyword id="KW-0325">Glycoprotein</keyword>
<keyword id="KW-0333">Golgi apparatus</keyword>
<keyword id="KW-0472">Membrane</keyword>
<keyword id="KW-0560">Oxidoreductase</keyword>
<keyword id="KW-0597">Phosphoprotein</keyword>
<keyword id="KW-1185">Reference proteome</keyword>
<keyword id="KW-0808">Transferase</keyword>
<keyword id="KW-0812">Transmembrane</keyword>
<keyword id="KW-1133">Transmembrane helix</keyword>
<reference key="1">
    <citation type="journal article" date="1998" name="DNA Res.">
        <title>Structural analysis of Arabidopsis thaliana chromosome 5. V. Sequence features of the regions of 1,381,565 bp covered by twenty one physically assigned P1 and TAC clones.</title>
        <authorList>
            <person name="Kaneko T."/>
            <person name="Kotani H."/>
            <person name="Nakamura Y."/>
            <person name="Sato S."/>
            <person name="Asamizu E."/>
            <person name="Miyajima N."/>
            <person name="Tabata S."/>
        </authorList>
    </citation>
    <scope>NUCLEOTIDE SEQUENCE [LARGE SCALE GENOMIC DNA]</scope>
    <source>
        <strain>cv. Columbia</strain>
    </source>
</reference>
<reference key="2">
    <citation type="journal article" date="2017" name="Plant J.">
        <title>Araport11: a complete reannotation of the Arabidopsis thaliana reference genome.</title>
        <authorList>
            <person name="Cheng C.Y."/>
            <person name="Krishnakumar V."/>
            <person name="Chan A.P."/>
            <person name="Thibaud-Nissen F."/>
            <person name="Schobel S."/>
            <person name="Town C.D."/>
        </authorList>
    </citation>
    <scope>GENOME REANNOTATION</scope>
    <source>
        <strain>cv. Columbia</strain>
    </source>
</reference>
<reference key="3">
    <citation type="journal article" date="2003" name="Science">
        <title>Empirical analysis of transcriptional activity in the Arabidopsis genome.</title>
        <authorList>
            <person name="Yamada K."/>
            <person name="Lim J."/>
            <person name="Dale J.M."/>
            <person name="Chen H."/>
            <person name="Shinn P."/>
            <person name="Palm C.J."/>
            <person name="Southwick A.M."/>
            <person name="Wu H.C."/>
            <person name="Kim C.J."/>
            <person name="Nguyen M."/>
            <person name="Pham P.K."/>
            <person name="Cheuk R.F."/>
            <person name="Karlin-Newmann G."/>
            <person name="Liu S.X."/>
            <person name="Lam B."/>
            <person name="Sakano H."/>
            <person name="Wu T."/>
            <person name="Yu G."/>
            <person name="Miranda M."/>
            <person name="Quach H.L."/>
            <person name="Tripp M."/>
            <person name="Chang C.H."/>
            <person name="Lee J.M."/>
            <person name="Toriumi M.J."/>
            <person name="Chan M.M."/>
            <person name="Tang C.C."/>
            <person name="Onodera C.S."/>
            <person name="Deng J.M."/>
            <person name="Akiyama K."/>
            <person name="Ansari Y."/>
            <person name="Arakawa T."/>
            <person name="Banh J."/>
            <person name="Banno F."/>
            <person name="Bowser L."/>
            <person name="Brooks S.Y."/>
            <person name="Carninci P."/>
            <person name="Chao Q."/>
            <person name="Choy N."/>
            <person name="Enju A."/>
            <person name="Goldsmith A.D."/>
            <person name="Gurjal M."/>
            <person name="Hansen N.F."/>
            <person name="Hayashizaki Y."/>
            <person name="Johnson-Hopson C."/>
            <person name="Hsuan V.W."/>
            <person name="Iida K."/>
            <person name="Karnes M."/>
            <person name="Khan S."/>
            <person name="Koesema E."/>
            <person name="Ishida J."/>
            <person name="Jiang P.X."/>
            <person name="Jones T."/>
            <person name="Kawai J."/>
            <person name="Kamiya A."/>
            <person name="Meyers C."/>
            <person name="Nakajima M."/>
            <person name="Narusaka M."/>
            <person name="Seki M."/>
            <person name="Sakurai T."/>
            <person name="Satou M."/>
            <person name="Tamse R."/>
            <person name="Vaysberg M."/>
            <person name="Wallender E.K."/>
            <person name="Wong C."/>
            <person name="Yamamura Y."/>
            <person name="Yuan S."/>
            <person name="Shinozaki K."/>
            <person name="Davis R.W."/>
            <person name="Theologis A."/>
            <person name="Ecker J.R."/>
        </authorList>
    </citation>
    <scope>NUCLEOTIDE SEQUENCE [LARGE SCALE MRNA]</scope>
    <source>
        <strain>cv. Columbia</strain>
    </source>
</reference>
<reference key="4">
    <citation type="journal article" date="2011" name="Plant Cell Physiol.">
        <title>The four Arabidopsis reduced wall acetylation genes are expressed in secondary wall-containing cells and required for the acetylation of xylan.</title>
        <authorList>
            <person name="Lee C."/>
            <person name="Teng Q."/>
            <person name="Zhong R."/>
            <person name="Ye Z.H."/>
        </authorList>
    </citation>
    <scope>FUNCTION</scope>
    <scope>DISRUPTION PHENOTYPE</scope>
    <scope>TISSUE SPECIFICITY</scope>
    <scope>SUBCELLULAR LOCATION</scope>
    <scope>GENE FAMILY</scope>
    <scope>NOMENCLATURE</scope>
</reference>
<reference key="5">
    <citation type="journal article" date="2011" name="Plant Physiol.">
        <title>Loss-of-function mutation of REDUCED WALL ACETYLATION2 in Arabidopsis leads to reduced cell wall acetylation and increased resistance to Botrytis cinerea.</title>
        <authorList>
            <person name="Manabe Y."/>
            <person name="Nafisi M."/>
            <person name="Verhertbruggen Y."/>
            <person name="Orfila C."/>
            <person name="Gille S."/>
            <person name="Rautengarten C."/>
            <person name="Cherk C."/>
            <person name="Marcus S.E."/>
            <person name="Somerville S."/>
            <person name="Pauly M."/>
            <person name="Knox J.P."/>
            <person name="Sakuragi Y."/>
            <person name="Scheller H.V."/>
        </authorList>
    </citation>
    <scope>DISRUPTION PHENOTYPE</scope>
    <scope>TISSUE SPECIFICITY</scope>
    <scope>GENE FAMILY</scope>
    <scope>NOMENCLATURE</scope>
    <source>
        <strain>cv. Columbia</strain>
    </source>
</reference>
<reference key="6">
    <citation type="journal article" date="2013" name="Plant Physiol.">
        <title>Reduced wall acetylation proteins play vital and distinct roles in cell wall O-acetylation in Arabidopsis.</title>
        <authorList>
            <person name="Manabe Y."/>
            <person name="Verhertbruggen Y."/>
            <person name="Gille S."/>
            <person name="Harholt J."/>
            <person name="Chong S.-L."/>
            <person name="Pawar P.M.-A."/>
            <person name="Mellerowicz E.J."/>
            <person name="Tenkanen M."/>
            <person name="Cheng K."/>
            <person name="Pauly M."/>
            <person name="Scheller H.V."/>
        </authorList>
    </citation>
    <scope>FUNCTION</scope>
    <scope>DISRUPTION PHENOTYPE</scope>
    <scope>GENE FAMILY</scope>
</reference>
<protein>
    <recommendedName>
        <fullName evidence="7 8">Protein REDUCED WALL ACETYLATION 1</fullName>
        <ecNumber evidence="9">2.3.1.-</ecNumber>
    </recommendedName>
</protein>
<proteinExistence type="evidence at transcript level"/>
<evidence type="ECO:0000250" key="1">
    <source>
        <dbReference type="UniProtKB" id="Q66GQ5"/>
    </source>
</evidence>
<evidence type="ECO:0000255" key="2"/>
<evidence type="ECO:0000255" key="3">
    <source>
        <dbReference type="PROSITE-ProRule" id="PRU00498"/>
    </source>
</evidence>
<evidence type="ECO:0000269" key="4">
    <source>
    </source>
</evidence>
<evidence type="ECO:0000269" key="5">
    <source>
    </source>
</evidence>
<evidence type="ECO:0000269" key="6">
    <source>
    </source>
</evidence>
<evidence type="ECO:0000303" key="7">
    <source>
    </source>
</evidence>
<evidence type="ECO:0000303" key="8">
    <source>
    </source>
</evidence>
<evidence type="ECO:0000305" key="9"/>
<evidence type="ECO:0000312" key="10">
    <source>
        <dbReference type="EMBL" id="AAM97005.1"/>
    </source>
</evidence>
<evidence type="ECO:0000312" key="11">
    <source>
        <dbReference type="EMBL" id="AED95371.1"/>
    </source>
</evidence>
<evidence type="ECO:0000312" key="12">
    <source>
        <dbReference type="EMBL" id="BAB11089.1"/>
    </source>
</evidence>
<comment type="function">
    <text evidence="5 6">Probable O-acetyltransferase involved in the acetylation of xylan during secondary wall biosynthesis.</text>
</comment>
<comment type="subcellular location">
    <subcellularLocation>
        <location evidence="5">Golgi apparatus membrane</location>
        <topology evidence="2">Multi-pass membrane protein</topology>
    </subcellularLocation>
</comment>
<comment type="tissue specificity">
    <text evidence="4 5">Expressed in cells undergoing secondary wall thickeningin a SND1-dependent manner, such as xylem cells and interfascicular fibers. Mostly expressed in the middle and bottom parts of the inflorescence stems (PubMed:21673009). Mainly observed in the more mature parts of inflorescence stems, but present ubiquitously (PubMed:21212300).</text>
</comment>
<comment type="disruption phenotype">
    <text evidence="4 5 6">No visible phenotype on cell wall acetylation in single mutant (PubMed:21212300). Severe growth phenotypes (e.g. dwarf and abnormal flower organs) associated with reduction in the secondary wall thickening and the stem mechanical strength in the quadruple mutant rwa1 rwa2 rwa3 rwa4 and characterized by reduced xylan acetylation and altered ratio of non-methylated to methylated glucuronic acid side chains. Absence of interfascicular fibers and xylem cells differentiation (PubMed:21673009, PubMed:24019426). The triple mutants rwa1 rwa2 rwa3, rwa1 rwa3 rwa4 and rwa1 rwa2 rwa4 are also dwarfs with abnormal morphology. Altered O-acetylated xyloglucans (XyG) oligosaccharides (XyGOs) composition (PubMed:24019426).</text>
</comment>
<comment type="similarity">
    <text evidence="9">Belongs to the PC-esterase family. CASD1 subfamily.</text>
</comment>
<comment type="sequence caution" evidence="9">
    <conflict type="erroneous gene model prediction">
        <sequence resource="EMBL-CDS" id="BAB11089"/>
    </conflict>
</comment>
<organism evidence="10">
    <name type="scientific">Arabidopsis thaliana</name>
    <name type="common">Mouse-ear cress</name>
    <dbReference type="NCBI Taxonomy" id="3702"/>
    <lineage>
        <taxon>Eukaryota</taxon>
        <taxon>Viridiplantae</taxon>
        <taxon>Streptophyta</taxon>
        <taxon>Embryophyta</taxon>
        <taxon>Tracheophyta</taxon>
        <taxon>Spermatophyta</taxon>
        <taxon>Magnoliopsida</taxon>
        <taxon>eudicotyledons</taxon>
        <taxon>Gunneridae</taxon>
        <taxon>Pentapetalae</taxon>
        <taxon>rosids</taxon>
        <taxon>malvids</taxon>
        <taxon>Brassicales</taxon>
        <taxon>Brassicaceae</taxon>
        <taxon>Camelineae</taxon>
        <taxon>Arabidopsis</taxon>
    </lineage>
</organism>